<accession>Q42510</accession>
<accession>Q38883</accession>
<accession>Q56ZY3</accession>
<reference key="1">
    <citation type="journal article" date="1994" name="Cell">
        <title>EMB30 is essential for normal cell division, cell expansion, and cell adhesion in Arabidopsis and encodes a protein that has similarity to Sec7.</title>
        <authorList>
            <person name="Shevell D.E."/>
            <person name="Leu W.-M."/>
            <person name="Gillmor C.S."/>
            <person name="Xia G."/>
            <person name="Feldmann K.A."/>
            <person name="Chua N.-H."/>
        </authorList>
    </citation>
    <scope>NUCLEOTIDE SEQUENCE [GENOMIC DNA / MRNA]</scope>
    <scope>DISRUPTION PHENOTYPE</scope>
    <scope>FUNCTION</scope>
    <scope>TISSUE SPECIFICITY</scope>
    <scope>MUTAGENESIS OF GLU-658</scope>
    <source>
        <strain>cv. Columbia</strain>
        <strain>cv. Wassilewskija</strain>
    </source>
</reference>
<reference key="2">
    <citation type="journal article" date="1996" name="Mol. Gen. Genet.">
        <title>Molecular analysis of the Arabidopsis pattern formation of gene GNOM: gene structure and intragenic complementation.</title>
        <authorList>
            <person name="Busch M."/>
            <person name="Mayer U."/>
            <person name="Juergens G."/>
        </authorList>
    </citation>
    <scope>NUCLEOTIDE SEQUENCE [GENOMIC DNA / MRNA]</scope>
    <scope>VARIANT PRO-95</scope>
    <scope>MUTANTS EMB30-1/T391/U87; B4049 AND TA477</scope>
    <source>
        <strain>cv. C24</strain>
        <strain>cv. Columbia</strain>
        <strain>cv. Landsberg erecta</strain>
    </source>
</reference>
<reference key="3">
    <citation type="journal article" date="2000" name="Nature">
        <title>Sequence and analysis of chromosome 1 of the plant Arabidopsis thaliana.</title>
        <authorList>
            <person name="Theologis A."/>
            <person name="Ecker J.R."/>
            <person name="Palm C.J."/>
            <person name="Federspiel N.A."/>
            <person name="Kaul S."/>
            <person name="White O."/>
            <person name="Alonso J."/>
            <person name="Altafi H."/>
            <person name="Araujo R."/>
            <person name="Bowman C.L."/>
            <person name="Brooks S.Y."/>
            <person name="Buehler E."/>
            <person name="Chan A."/>
            <person name="Chao Q."/>
            <person name="Chen H."/>
            <person name="Cheuk R.F."/>
            <person name="Chin C.W."/>
            <person name="Chung M.K."/>
            <person name="Conn L."/>
            <person name="Conway A.B."/>
            <person name="Conway A.R."/>
            <person name="Creasy T.H."/>
            <person name="Dewar K."/>
            <person name="Dunn P."/>
            <person name="Etgu P."/>
            <person name="Feldblyum T.V."/>
            <person name="Feng J.-D."/>
            <person name="Fong B."/>
            <person name="Fujii C.Y."/>
            <person name="Gill J.E."/>
            <person name="Goldsmith A.D."/>
            <person name="Haas B."/>
            <person name="Hansen N.F."/>
            <person name="Hughes B."/>
            <person name="Huizar L."/>
            <person name="Hunter J.L."/>
            <person name="Jenkins J."/>
            <person name="Johnson-Hopson C."/>
            <person name="Khan S."/>
            <person name="Khaykin E."/>
            <person name="Kim C.J."/>
            <person name="Koo H.L."/>
            <person name="Kremenetskaia I."/>
            <person name="Kurtz D.B."/>
            <person name="Kwan A."/>
            <person name="Lam B."/>
            <person name="Langin-Hooper S."/>
            <person name="Lee A."/>
            <person name="Lee J.M."/>
            <person name="Lenz C.A."/>
            <person name="Li J.H."/>
            <person name="Li Y.-P."/>
            <person name="Lin X."/>
            <person name="Liu S.X."/>
            <person name="Liu Z.A."/>
            <person name="Luros J.S."/>
            <person name="Maiti R."/>
            <person name="Marziali A."/>
            <person name="Militscher J."/>
            <person name="Miranda M."/>
            <person name="Nguyen M."/>
            <person name="Nierman W.C."/>
            <person name="Osborne B.I."/>
            <person name="Pai G."/>
            <person name="Peterson J."/>
            <person name="Pham P.K."/>
            <person name="Rizzo M."/>
            <person name="Rooney T."/>
            <person name="Rowley D."/>
            <person name="Sakano H."/>
            <person name="Salzberg S.L."/>
            <person name="Schwartz J.R."/>
            <person name="Shinn P."/>
            <person name="Southwick A.M."/>
            <person name="Sun H."/>
            <person name="Tallon L.J."/>
            <person name="Tambunga G."/>
            <person name="Toriumi M.J."/>
            <person name="Town C.D."/>
            <person name="Utterback T."/>
            <person name="Van Aken S."/>
            <person name="Vaysberg M."/>
            <person name="Vysotskaia V.S."/>
            <person name="Walker M."/>
            <person name="Wu D."/>
            <person name="Yu G."/>
            <person name="Fraser C.M."/>
            <person name="Venter J.C."/>
            <person name="Davis R.W."/>
        </authorList>
    </citation>
    <scope>NUCLEOTIDE SEQUENCE [LARGE SCALE GENOMIC DNA]</scope>
    <source>
        <strain>cv. Columbia</strain>
    </source>
</reference>
<reference key="4">
    <citation type="journal article" date="2017" name="Plant J.">
        <title>Araport11: a complete reannotation of the Arabidopsis thaliana reference genome.</title>
        <authorList>
            <person name="Cheng C.Y."/>
            <person name="Krishnakumar V."/>
            <person name="Chan A.P."/>
            <person name="Thibaud-Nissen F."/>
            <person name="Schobel S."/>
            <person name="Town C.D."/>
        </authorList>
    </citation>
    <scope>GENOME REANNOTATION</scope>
    <source>
        <strain>cv. Columbia</strain>
    </source>
</reference>
<reference key="5">
    <citation type="submission" date="2005-03" db="EMBL/GenBank/DDBJ databases">
        <title>Large-scale analysis of RIKEN Arabidopsis full-length (RAFL) cDNAs.</title>
        <authorList>
            <person name="Totoki Y."/>
            <person name="Seki M."/>
            <person name="Ishida J."/>
            <person name="Nakajima M."/>
            <person name="Enju A."/>
            <person name="Kamiya A."/>
            <person name="Narusaka M."/>
            <person name="Shin-i T."/>
            <person name="Nakagawa M."/>
            <person name="Sakamoto N."/>
            <person name="Oishi K."/>
            <person name="Kohara Y."/>
            <person name="Kobayashi M."/>
            <person name="Toyoda A."/>
            <person name="Sakaki Y."/>
            <person name="Sakurai T."/>
            <person name="Iida K."/>
            <person name="Akiyama K."/>
            <person name="Satou M."/>
            <person name="Toyoda T."/>
            <person name="Konagaya A."/>
            <person name="Carninci P."/>
            <person name="Kawai J."/>
            <person name="Hayashizaki Y."/>
            <person name="Shinozaki K."/>
        </authorList>
    </citation>
    <scope>NUCLEOTIDE SEQUENCE [LARGE SCALE MRNA] OF 162-1451</scope>
    <source>
        <strain>cv. Columbia</strain>
    </source>
</reference>
<reference key="6">
    <citation type="journal article" date="1993" name="Development">
        <title>Apical-basal pattern formation in the Arabidopsis embryo: studies on the role of the gnom gene.</title>
        <authorList>
            <person name="Mayer U."/>
            <person name="Buettner G."/>
            <person name="Juergens G."/>
        </authorList>
    </citation>
    <scope>FUNCTION</scope>
    <scope>DISRUPTION PHENOTYPE</scope>
</reference>
<reference key="7">
    <citation type="journal article" date="1999" name="Science">
        <title>Coordinated polar localization of auxin efflux carrier PIN1 by GNOM ARF GEF.</title>
        <authorList>
            <person name="Steinmann T."/>
            <person name="Geldner N."/>
            <person name="Grebe M."/>
            <person name="Mangold S."/>
            <person name="Jackson C.L."/>
            <person name="Paris S."/>
            <person name="Gaelweiler L."/>
            <person name="Palme K."/>
            <person name="Juergens G."/>
        </authorList>
    </citation>
    <scope>FUNCTION</scope>
    <scope>ACTIVITY REGULATION</scope>
    <scope>SUBCELLULAR LOCATION</scope>
</reference>
<reference key="8">
    <citation type="journal article" date="2000" name="Development">
        <title>A series of novel mutants of Arabidopsis thaliana that are defective in the formation of continuous vascular network: calling the auxin signal flow canalization hypothesis into question.</title>
        <authorList>
            <person name="Koizumi K."/>
            <person name="Sugiyama M."/>
            <person name="Fukuda H."/>
        </authorList>
    </citation>
    <scope>DISRUPTION PHENOTYPE</scope>
</reference>
<reference key="9">
    <citation type="journal article" date="2000" name="Plant Cell">
        <title>A conserved domain of the Arabidopsis GNOM protein mediates subunit interaction and cyclophilin 5 binding.</title>
        <authorList>
            <person name="Grebe M."/>
            <person name="Gadea J."/>
            <person name="Steinmann T."/>
            <person name="Kientz M."/>
            <person name="Rahfeld J.-U."/>
            <person name="Salchert K."/>
            <person name="Koncz C."/>
            <person name="Juergens G."/>
        </authorList>
    </citation>
    <scope>HOMODIMERIZATION</scope>
    <scope>INTERACTION WITH CYP19-4/CYP5</scope>
    <scope>TISSUE SPECIFICITY</scope>
    <scope>SUBCELLULAR LOCATION</scope>
    <scope>DOMAIN</scope>
</reference>
<reference key="10">
    <citation type="journal article" date="2000" name="Plant Cell">
        <title>Cell wall alterations in the arabidopsis emb30 mutant.</title>
        <authorList>
            <person name="Shevell D.E."/>
            <person name="Kunkel T."/>
            <person name="Chua N.H."/>
        </authorList>
    </citation>
    <scope>DISRUPTION PHENOTYPE</scope>
    <scope>FUNCTION</scope>
</reference>
<reference key="11">
    <citation type="journal article" date="2003" name="Cell">
        <title>The Arabidopsis GNOM ARF-GEF mediates endosomal recycling, auxin transport, and auxin-dependent plant growth.</title>
        <authorList>
            <person name="Geldner N."/>
            <person name="Anders N."/>
            <person name="Wolters H."/>
            <person name="Keicher J."/>
            <person name="Kornberger W."/>
            <person name="Muller P."/>
            <person name="Delbarre A."/>
            <person name="Ueda T."/>
            <person name="Nakano A."/>
            <person name="Juergens G."/>
        </authorList>
    </citation>
    <scope>MUTAGENESIS OF MET-696</scope>
    <scope>SUBCELLULAR LOCATION</scope>
    <scope>FUNCTION</scope>
    <scope>GENE FAMILY</scope>
</reference>
<reference key="12">
    <citation type="journal article" date="2003" name="Trends Plant Sci.">
        <title>Vesicular cycling mechanisms that control auxin transport polarity.</title>
        <authorList>
            <person name="Muday G.K."/>
            <person name="Peer W.A."/>
            <person name="Murphy A.S."/>
        </authorList>
    </citation>
    <scope>REVIEW</scope>
</reference>
<reference key="13">
    <citation type="journal article" date="2004" name="Development">
        <title>Partial loss-of-function alleles reveal a role for GNOM in auxin transport-related, post-embryonic development of Arabidopsis.</title>
        <authorList>
            <person name="Geldner N."/>
            <person name="Richter S."/>
            <person name="Vieten A."/>
            <person name="Marquardt S."/>
            <person name="Torres-Ruiz R.A."/>
            <person name="Mayer U."/>
            <person name="Juergens G."/>
        </authorList>
    </citation>
    <scope>DEVELOPMENTAL STAGE</scope>
    <scope>FUNCTION</scope>
</reference>
<reference key="14">
    <citation type="journal article" date="2004" name="Mol. Biol. Cell">
        <title>Phylogenetic analysis of Sec7-domain-containing Arf nucleotide exchangers.</title>
        <authorList>
            <person name="Cox R."/>
            <person name="Mason-Gamer R.J."/>
            <person name="Jackson C.L."/>
            <person name="Segev N."/>
        </authorList>
    </citation>
    <scope>GENE FAMILY</scope>
    <scope>NOMENCLATURE</scope>
</reference>
<reference key="15">
    <citation type="journal article" date="2007" name="Nature">
        <title>Functional diversification of closely related ARF-GEFs in protein secretion and recycling.</title>
        <authorList>
            <person name="Richter S."/>
            <person name="Geldner N."/>
            <person name="Schrader J."/>
            <person name="Wolters H."/>
            <person name="Stierhof Y.D."/>
            <person name="Rios G."/>
            <person name="Koncz C."/>
            <person name="Robinson D.G."/>
            <person name="Juergens G."/>
        </authorList>
    </citation>
    <scope>GENE FAMILY</scope>
</reference>
<reference key="16">
    <citation type="journal article" date="2008" name="Curr. Biol.">
        <title>ARF GEF-dependent transcytosis and polar delivery of PIN auxin carriers in Arabidopsis.</title>
        <authorList>
            <person name="Kleine-Vehn J."/>
            <person name="Dhonukshe P."/>
            <person name="Sauer M."/>
            <person name="Brewer P.B."/>
            <person name="Wisniewska J."/>
            <person name="Paciorek T."/>
            <person name="Benkova E."/>
            <person name="Friml J."/>
        </authorList>
    </citation>
    <scope>FUNCTION</scope>
</reference>
<reference key="17">
    <citation type="journal article" date="2008" name="Plant Cell">
        <title>Membrane association of the Arabidopsis ARF exchange factor GNOM involves interaction of conserved domains.</title>
        <authorList>
            <person name="Anders N."/>
            <person name="Nielsen M."/>
            <person name="Keicher J."/>
            <person name="Stierhof Y.D."/>
            <person name="Furutani M."/>
            <person name="Tasaka M."/>
            <person name="Skriver K."/>
            <person name="Juergens G."/>
        </authorList>
    </citation>
    <scope>HOMODIMERIZATION</scope>
    <scope>DOMAIN</scope>
    <scope>MEMBRANE-ASSOCIATION</scope>
</reference>
<reference key="18">
    <citation type="journal article" date="2009" name="Plant Physiol.">
        <title>GNOM-mediated vesicular trafficking plays an essential role in hydrotropism of Arabidopsis roots.</title>
        <authorList>
            <person name="Miyazawa Y."/>
            <person name="Takahashi A."/>
            <person name="Kobayashi A."/>
            <person name="Kaneyasu T."/>
            <person name="Fujii N."/>
            <person name="Takahashi H."/>
        </authorList>
    </citation>
    <scope>FUNCTION</scope>
    <scope>MUTAGENESIS OF GLY-951</scope>
</reference>
<reference key="19">
    <citation type="journal article" date="2009" name="Plant Sci.">
        <title>A molecular mechanism unique to hydrotropism in roots.</title>
        <authorList>
            <person name="Miyazawa Y."/>
            <person name="Ito Y."/>
            <person name="Moriwaki T."/>
            <person name="Kobayashi A."/>
            <person name="Fujii N."/>
            <person name="Takahashi H."/>
        </authorList>
    </citation>
    <scope>FUNCTION</scope>
</reference>
<reference key="20">
    <citation type="journal article" date="2010" name="Eur. J. Cell Biol.">
        <title>Role of the GNOM gene in Arabidopsis apical-basal patterning--From mutant phenotype to cellular mechanism of protein action.</title>
        <authorList>
            <person name="Richter S."/>
            <person name="Anders N."/>
            <person name="Wolters H."/>
            <person name="Beckmann H."/>
            <person name="Thomann A."/>
            <person name="Heinrich R."/>
            <person name="Schrader J."/>
            <person name="Singh M.K."/>
            <person name="Geldner N."/>
            <person name="Mayer U."/>
            <person name="Juergens G."/>
        </authorList>
    </citation>
    <scope>REVIEW</scope>
    <scope>FUNCTION</scope>
</reference>
<reference key="21">
    <citation type="journal article" date="2010" name="Proc. Natl. Acad. Sci. U.S.A.">
        <title>ADP-ribosylation factor machinery mediates endocytosis in plant cells.</title>
        <authorList>
            <person name="Naramoto S."/>
            <person name="Kleine-Vehn J."/>
            <person name="Robert S."/>
            <person name="Fujimoto M."/>
            <person name="Dainobu T."/>
            <person name="Paciorek T."/>
            <person name="Ueda T."/>
            <person name="Nakano A."/>
            <person name="Van Montagu M.C."/>
            <person name="Fukuda H."/>
            <person name="Friml J."/>
        </authorList>
    </citation>
    <scope>SUBCELLULAR LOCATION</scope>
    <scope>FUNCTION</scope>
</reference>
<reference key="22">
    <citation type="journal article" date="2011" name="Development">
        <title>Coordination of apical and basal embryo development revealed by tissue-specific GNOM functions.</title>
        <authorList>
            <person name="Wolters H."/>
            <person name="Anders N."/>
            <person name="Geldner N."/>
            <person name="Gavidia R."/>
            <person name="Juergens G."/>
        </authorList>
    </citation>
    <scope>FUNCTION</scope>
</reference>
<reference key="23">
    <citation type="journal article" date="2011" name="Plant J.">
        <title>Polarization of PIN3-dependent auxin transport for hypocotyl gravitropic response in Arabidopsis thaliana.</title>
        <authorList>
            <person name="Rakusova H."/>
            <person name="Gallego-Bartolome J."/>
            <person name="Vanstraelen M."/>
            <person name="Robert H.S."/>
            <person name="Alabadi D."/>
            <person name="Blazquez M.A."/>
            <person name="Benkova E."/>
            <person name="Friml J."/>
        </authorList>
    </citation>
    <scope>FUNCTION</scope>
</reference>
<organism>
    <name type="scientific">Arabidopsis thaliana</name>
    <name type="common">Mouse-ear cress</name>
    <dbReference type="NCBI Taxonomy" id="3702"/>
    <lineage>
        <taxon>Eukaryota</taxon>
        <taxon>Viridiplantae</taxon>
        <taxon>Streptophyta</taxon>
        <taxon>Embryophyta</taxon>
        <taxon>Tracheophyta</taxon>
        <taxon>Spermatophyta</taxon>
        <taxon>Magnoliopsida</taxon>
        <taxon>eudicotyledons</taxon>
        <taxon>Gunneridae</taxon>
        <taxon>Pentapetalae</taxon>
        <taxon>rosids</taxon>
        <taxon>malvids</taxon>
        <taxon>Brassicales</taxon>
        <taxon>Brassicaceae</taxon>
        <taxon>Camelineae</taxon>
        <taxon>Arabidopsis</taxon>
    </lineage>
</organism>
<gene>
    <name type="primary">GN</name>
    <name type="synonym">EMB30</name>
    <name type="synonym">GBF3</name>
    <name type="synonym">MIZ2</name>
    <name type="synonym">VAN7</name>
    <name type="ordered locus">At1g13980</name>
    <name type="ORF">F16A14.20</name>
    <name type="ORF">F7A19.7</name>
</gene>
<comment type="function">
    <text evidence="4 7 8 9 11 12 13 14 15 16 18 19 20">Activates the ARF proteins by exchanging bound GDP for free GTP. Plays a role in vesicular protein sorting. Acts as the major regulator of endosomal vesicle trafficking but is also involved in the endocytosis process. Could function redundantly with GNL1 in the retrograde Golgi to endoplasmic reticulum trafficking. Regulates vesicle trafficking required for the coordinated polar localization of auxin efflux carriers which in turn determines the direction of auxin flow. Mediates the sorting of PIN1 from endosomal compartments to the basal plasma membrane and the polarization of PIN3 to the bottom side of hypocotyl endodermal cells. Involved in the specification of apical-basal pattern formation in the early embryo and during root formation. Required for correct cell wall organization leading to normal cell adhesion during seedling development. Also plays an essential role in hydrotropism of seedling roots.</text>
</comment>
<comment type="activity regulation">
    <text evidence="4">Inhibited by brefeldin A (BFA).</text>
</comment>
<comment type="subunit">
    <text evidence="5">Homodimer. Interacts with CYP19-4/CYP5 in vitro.</text>
</comment>
<comment type="interaction">
    <interactant intactId="EBI-1998836">
        <id>Q42510</id>
    </interactant>
    <interactant intactId="EBI-2320844">
        <id>Q8LDP4</id>
        <label>CYP19-4</label>
    </interactant>
    <organismsDiffer>false</organismsDiffer>
    <experiments>6</experiments>
</comment>
<comment type="interaction">
    <interactant intactId="EBI-1998836">
        <id>Q42510</id>
    </interactant>
    <interactant intactId="EBI-1998836">
        <id>Q42510</id>
        <label>GN</label>
    </interactant>
    <organismsDiffer>false</organismsDiffer>
    <experiments>8</experiments>
</comment>
<comment type="interaction">
    <interactant intactId="EBI-1998836">
        <id>Q42510</id>
    </interactant>
    <interactant intactId="EBI-1764934">
        <id>P49598</id>
        <label>PP2CA</label>
    </interactant>
    <organismsDiffer>false</organismsDiffer>
    <experiments>3</experiments>
</comment>
<comment type="subcellular location">
    <subcellularLocation>
        <location>Cytoplasm</location>
        <location>Cytosol</location>
    </subcellularLocation>
    <subcellularLocation>
        <location>Endosome membrane</location>
        <topology>Peripheral membrane protein</topology>
        <orientation>Cytoplasmic side</orientation>
    </subcellularLocation>
    <subcellularLocation>
        <location>Cell membrane</location>
        <topology>Peripheral membrane protein</topology>
        <orientation>Cytoplasmic side</orientation>
    </subcellularLocation>
    <text>Soluble and partially membrane-bound.</text>
</comment>
<comment type="tissue specificity">
    <text evidence="5 16">Stems, leaves, flowers, siliques, floral inflorescence and roots. Expressed in the whole plant (at the protein level).</text>
</comment>
<comment type="developmental stage">
    <text evidence="9">Continually expressed in both embryogenesis and postembryonic organ development. Strongly expressed in actively dividing or elongating cells but only weakly or not at all in differentiated tissues other than the vasculature.</text>
</comment>
<comment type="domain">
    <text evidence="5 10">The DCB domain is required for both homodimerization and interaction with CYP protein. Heterotypic interaction of DCB domain with the N-terminal part of the SEC7 domain is required for membrane association and catalytic activity of the protein.</text>
</comment>
<comment type="disruption phenotype">
    <text evidence="6 7 16 20">Lack of morphological features of apical-basal polarity resulting of no root, no true hypocotyl and abnormal shoot apical meristem. Cell wall alterations. Defects in cell adhesion. Aberrant leaf venation.</text>
</comment>
<comment type="sequence caution" evidence="21">
    <conflict type="erroneous initiation">
        <sequence resource="EMBL-CDS" id="BAD94131"/>
    </conflict>
    <text>Truncated N-terminus.</text>
</comment>
<dbReference type="EMBL" id="U56140">
    <property type="protein sequence ID" value="AAB01205.1"/>
    <property type="molecule type" value="mRNA"/>
</dbReference>
<dbReference type="EMBL" id="U56141">
    <property type="protein sequence ID" value="AAB01206.1"/>
    <property type="molecule type" value="Genomic_DNA"/>
</dbReference>
<dbReference type="EMBL" id="U36432">
    <property type="protein sequence ID" value="AAA91150.1"/>
    <property type="molecule type" value="mRNA"/>
</dbReference>
<dbReference type="EMBL" id="U36433">
    <property type="protein sequence ID" value="AAA91151.1"/>
    <property type="molecule type" value="Genomic_DNA"/>
</dbReference>
<dbReference type="EMBL" id="AC007576">
    <property type="protein sequence ID" value="AAD39284.1"/>
    <property type="molecule type" value="Genomic_DNA"/>
</dbReference>
<dbReference type="EMBL" id="AC068197">
    <property type="protein sequence ID" value="AAF79403.1"/>
    <property type="molecule type" value="Genomic_DNA"/>
</dbReference>
<dbReference type="EMBL" id="CP002684">
    <property type="protein sequence ID" value="AEE29092.1"/>
    <property type="molecule type" value="Genomic_DNA"/>
</dbReference>
<dbReference type="EMBL" id="CP002684">
    <property type="protein sequence ID" value="AEE29093.1"/>
    <property type="molecule type" value="Genomic_DNA"/>
</dbReference>
<dbReference type="EMBL" id="AK220827">
    <property type="protein sequence ID" value="BAD94131.1"/>
    <property type="status" value="ALT_INIT"/>
    <property type="molecule type" value="mRNA"/>
</dbReference>
<dbReference type="PIR" id="S65571">
    <property type="entry name" value="S65571"/>
</dbReference>
<dbReference type="RefSeq" id="NP_001184991.1">
    <property type="nucleotide sequence ID" value="NM_001198062.1"/>
</dbReference>
<dbReference type="RefSeq" id="NP_172851.1">
    <property type="nucleotide sequence ID" value="NM_101264.4"/>
</dbReference>
<dbReference type="SMR" id="Q42510"/>
<dbReference type="BioGRID" id="23198">
    <property type="interactions" value="4"/>
</dbReference>
<dbReference type="FunCoup" id="Q42510">
    <property type="interactions" value="4372"/>
</dbReference>
<dbReference type="IntAct" id="Q42510">
    <property type="interactions" value="3"/>
</dbReference>
<dbReference type="STRING" id="3702.Q42510"/>
<dbReference type="iPTMnet" id="Q42510"/>
<dbReference type="PaxDb" id="3702-AT1G13980.1"/>
<dbReference type="ProteomicsDB" id="247011"/>
<dbReference type="EnsemblPlants" id="AT1G13980.1">
    <property type="protein sequence ID" value="AT1G13980.1"/>
    <property type="gene ID" value="AT1G13980"/>
</dbReference>
<dbReference type="EnsemblPlants" id="AT1G13980.2">
    <property type="protein sequence ID" value="AT1G13980.2"/>
    <property type="gene ID" value="AT1G13980"/>
</dbReference>
<dbReference type="GeneID" id="837958"/>
<dbReference type="Gramene" id="AT1G13980.1">
    <property type="protein sequence ID" value="AT1G13980.1"/>
    <property type="gene ID" value="AT1G13980"/>
</dbReference>
<dbReference type="Gramene" id="AT1G13980.2">
    <property type="protein sequence ID" value="AT1G13980.2"/>
    <property type="gene ID" value="AT1G13980"/>
</dbReference>
<dbReference type="KEGG" id="ath:AT1G13980"/>
<dbReference type="Araport" id="AT1G13980"/>
<dbReference type="TAIR" id="AT1G13980">
    <property type="gene designation" value="GN"/>
</dbReference>
<dbReference type="eggNOG" id="KOG0928">
    <property type="taxonomic scope" value="Eukaryota"/>
</dbReference>
<dbReference type="HOGENOM" id="CLU_001204_1_0_1"/>
<dbReference type="InParanoid" id="Q42510"/>
<dbReference type="OMA" id="CRDIRHH"/>
<dbReference type="PhylomeDB" id="Q42510"/>
<dbReference type="PRO" id="PR:Q42510"/>
<dbReference type="Proteomes" id="UP000006548">
    <property type="component" value="Chromosome 1"/>
</dbReference>
<dbReference type="ExpressionAtlas" id="Q42510">
    <property type="expression patterns" value="baseline and differential"/>
</dbReference>
<dbReference type="GO" id="GO:0005829">
    <property type="term" value="C:cytosol"/>
    <property type="evidence" value="ECO:0000314"/>
    <property type="project" value="TAIR"/>
</dbReference>
<dbReference type="GO" id="GO:0005768">
    <property type="term" value="C:endosome"/>
    <property type="evidence" value="ECO:0000314"/>
    <property type="project" value="UniProtKB"/>
</dbReference>
<dbReference type="GO" id="GO:0010008">
    <property type="term" value="C:endosome membrane"/>
    <property type="evidence" value="ECO:0007669"/>
    <property type="project" value="UniProtKB-SubCell"/>
</dbReference>
<dbReference type="GO" id="GO:0005886">
    <property type="term" value="C:plasma membrane"/>
    <property type="evidence" value="ECO:0000314"/>
    <property type="project" value="TAIR"/>
</dbReference>
<dbReference type="GO" id="GO:0005085">
    <property type="term" value="F:guanyl-nucleotide exchange factor activity"/>
    <property type="evidence" value="ECO:0000314"/>
    <property type="project" value="UniProtKB"/>
</dbReference>
<dbReference type="GO" id="GO:0042802">
    <property type="term" value="F:identical protein binding"/>
    <property type="evidence" value="ECO:0000353"/>
    <property type="project" value="IntAct"/>
</dbReference>
<dbReference type="GO" id="GO:0042803">
    <property type="term" value="F:protein homodimerization activity"/>
    <property type="evidence" value="ECO:0000353"/>
    <property type="project" value="TAIR"/>
</dbReference>
<dbReference type="GO" id="GO:0010540">
    <property type="term" value="P:basipetal auxin transport"/>
    <property type="evidence" value="ECO:0000315"/>
    <property type="project" value="TAIR"/>
</dbReference>
<dbReference type="GO" id="GO:0007155">
    <property type="term" value="P:cell adhesion"/>
    <property type="evidence" value="ECO:0000315"/>
    <property type="project" value="TAIR"/>
</dbReference>
<dbReference type="GO" id="GO:0071555">
    <property type="term" value="P:cell wall organization"/>
    <property type="evidence" value="ECO:0000315"/>
    <property type="project" value="TAIR"/>
</dbReference>
<dbReference type="GO" id="GO:0070417">
    <property type="term" value="P:cellular response to cold"/>
    <property type="evidence" value="ECO:0000314"/>
    <property type="project" value="TAIR"/>
</dbReference>
<dbReference type="GO" id="GO:0000911">
    <property type="term" value="P:cytokinesis by cell plate formation"/>
    <property type="evidence" value="ECO:0000315"/>
    <property type="project" value="TAIR"/>
</dbReference>
<dbReference type="GO" id="GO:0009793">
    <property type="term" value="P:embryo development ending in seed dormancy"/>
    <property type="evidence" value="ECO:0000315"/>
    <property type="project" value="TAIR"/>
</dbReference>
<dbReference type="GO" id="GO:0009880">
    <property type="term" value="P:embryonic pattern specification"/>
    <property type="evidence" value="ECO:0000315"/>
    <property type="project" value="TAIR"/>
</dbReference>
<dbReference type="GO" id="GO:0006897">
    <property type="term" value="P:endocytosis"/>
    <property type="evidence" value="ECO:0000315"/>
    <property type="project" value="TAIR"/>
</dbReference>
<dbReference type="GO" id="GO:0032509">
    <property type="term" value="P:endosome transport via multivesicular body sorting pathway"/>
    <property type="evidence" value="ECO:0000315"/>
    <property type="project" value="UniProtKB"/>
</dbReference>
<dbReference type="GO" id="GO:0001736">
    <property type="term" value="P:establishment of planar polarity"/>
    <property type="evidence" value="ECO:0000316"/>
    <property type="project" value="TAIR"/>
</dbReference>
<dbReference type="GO" id="GO:0010274">
    <property type="term" value="P:hydrotropism"/>
    <property type="evidence" value="ECO:0000315"/>
    <property type="project" value="UniProtKB"/>
</dbReference>
<dbReference type="GO" id="GO:0010311">
    <property type="term" value="P:lateral root formation"/>
    <property type="evidence" value="ECO:0000315"/>
    <property type="project" value="TAIR"/>
</dbReference>
<dbReference type="GO" id="GO:0009942">
    <property type="term" value="P:longitudinal axis specification"/>
    <property type="evidence" value="ECO:0000315"/>
    <property type="project" value="TAIR"/>
</dbReference>
<dbReference type="GO" id="GO:0010087">
    <property type="term" value="P:phloem or xylem histogenesis"/>
    <property type="evidence" value="ECO:0000315"/>
    <property type="project" value="TAIR"/>
</dbReference>
<dbReference type="GO" id="GO:0015031">
    <property type="term" value="P:protein transport"/>
    <property type="evidence" value="ECO:0007669"/>
    <property type="project" value="UniProtKB-KW"/>
</dbReference>
<dbReference type="GO" id="GO:0032012">
    <property type="term" value="P:regulation of ARF protein signal transduction"/>
    <property type="evidence" value="ECO:0007669"/>
    <property type="project" value="InterPro"/>
</dbReference>
<dbReference type="GO" id="GO:0048209">
    <property type="term" value="P:regulation of vesicle targeting, to, from or within Golgi"/>
    <property type="evidence" value="ECO:0000304"/>
    <property type="project" value="TAIR"/>
</dbReference>
<dbReference type="GO" id="GO:0048765">
    <property type="term" value="P:root hair cell differentiation"/>
    <property type="evidence" value="ECO:0000316"/>
    <property type="project" value="TAIR"/>
</dbReference>
<dbReference type="GO" id="GO:0009826">
    <property type="term" value="P:unidimensional cell growth"/>
    <property type="evidence" value="ECO:0000315"/>
    <property type="project" value="TAIR"/>
</dbReference>
<dbReference type="GO" id="GO:0016192">
    <property type="term" value="P:vesicle-mediated transport"/>
    <property type="evidence" value="ECO:0000315"/>
    <property type="project" value="UniProtKB"/>
</dbReference>
<dbReference type="CDD" id="cd00171">
    <property type="entry name" value="Sec7"/>
    <property type="match status" value="1"/>
</dbReference>
<dbReference type="FunFam" id="1.10.220.20:FF:000005">
    <property type="entry name" value="ARF guanine-nucleotide exchange factor GNOM"/>
    <property type="match status" value="1"/>
</dbReference>
<dbReference type="FunFam" id="1.10.1000.11:FF:000010">
    <property type="entry name" value="ARF guanine-nucleotide exchange factor GNOM-like"/>
    <property type="match status" value="1"/>
</dbReference>
<dbReference type="Gene3D" id="1.10.220.20">
    <property type="match status" value="1"/>
</dbReference>
<dbReference type="Gene3D" id="1.10.1000.11">
    <property type="entry name" value="Arf Nucleotide-binding Site Opener,domain 2"/>
    <property type="match status" value="1"/>
</dbReference>
<dbReference type="InterPro" id="IPR016024">
    <property type="entry name" value="ARM-type_fold"/>
</dbReference>
<dbReference type="InterPro" id="IPR056604">
    <property type="entry name" value="GBF1-like_TPR"/>
</dbReference>
<dbReference type="InterPro" id="IPR032691">
    <property type="entry name" value="Mon2/Sec7/BIG1-like_HUS"/>
</dbReference>
<dbReference type="InterPro" id="IPR023394">
    <property type="entry name" value="Sec7_C_sf"/>
</dbReference>
<dbReference type="InterPro" id="IPR000904">
    <property type="entry name" value="Sec7_dom"/>
</dbReference>
<dbReference type="InterPro" id="IPR035999">
    <property type="entry name" value="Sec7_dom_sf"/>
</dbReference>
<dbReference type="PANTHER" id="PTHR10663:SF388">
    <property type="entry name" value="GOLGI-SPECIFIC BREFELDIN A-RESISTANCE GUANINE NUCLEOTIDE EXCHANGE FACTOR 1"/>
    <property type="match status" value="1"/>
</dbReference>
<dbReference type="PANTHER" id="PTHR10663">
    <property type="entry name" value="GUANYL-NUCLEOTIDE EXCHANGE FACTOR"/>
    <property type="match status" value="1"/>
</dbReference>
<dbReference type="Pfam" id="PF01369">
    <property type="entry name" value="Sec7"/>
    <property type="match status" value="1"/>
</dbReference>
<dbReference type="Pfam" id="PF12783">
    <property type="entry name" value="Sec7-like_HUS"/>
    <property type="match status" value="1"/>
</dbReference>
<dbReference type="Pfam" id="PF23325">
    <property type="entry name" value="TPR_28"/>
    <property type="match status" value="1"/>
</dbReference>
<dbReference type="SMART" id="SM00222">
    <property type="entry name" value="Sec7"/>
    <property type="match status" value="1"/>
</dbReference>
<dbReference type="SUPFAM" id="SSF48371">
    <property type="entry name" value="ARM repeat"/>
    <property type="match status" value="1"/>
</dbReference>
<dbReference type="SUPFAM" id="SSF48425">
    <property type="entry name" value="Sec7 domain"/>
    <property type="match status" value="1"/>
</dbReference>
<dbReference type="PROSITE" id="PS50190">
    <property type="entry name" value="SEC7"/>
    <property type="match status" value="1"/>
</dbReference>
<feature type="chain" id="PRO_0000120211" description="ARF guanine-nucleotide exchange factor GNOM">
    <location>
        <begin position="1"/>
        <end position="1451"/>
    </location>
</feature>
<feature type="domain" description="SEC7" evidence="2">
    <location>
        <begin position="557"/>
        <end position="752"/>
    </location>
</feature>
<feature type="region of interest" description="DCB domain">
    <location>
        <begin position="1"/>
        <end position="246"/>
    </location>
</feature>
<feature type="region of interest" description="Disordered" evidence="3">
    <location>
        <begin position="1430"/>
        <end position="1451"/>
    </location>
</feature>
<feature type="active site" evidence="1">
    <location>
        <position position="658"/>
    </location>
</feature>
<feature type="sequence variant" description="In strain: cv. Landsberg erecta." evidence="17">
    <original>Q</original>
    <variation>P</variation>
    <location>
        <position position="95"/>
    </location>
</feature>
<feature type="mutagenesis site" description="In B4049; abnormal embryo development.">
    <original>G</original>
    <variation>R</variation>
    <location>
        <position position="579"/>
    </location>
</feature>
<feature type="mutagenesis site" description="In TA477; abnormal embryo development.">
    <location>
        <begin position="599"/>
        <end position="601"/>
    </location>
</feature>
<feature type="mutagenesis site" description="In emb30-1/T391/U87; abnormal embryo development." evidence="16">
    <original>E</original>
    <variation>K</variation>
    <location>
        <position position="658"/>
    </location>
</feature>
<feature type="mutagenesis site" description="Confers brefeldin A (BFA) resistance." evidence="8">
    <original>M</original>
    <variation>L</variation>
    <location>
        <position position="696"/>
    </location>
</feature>
<feature type="mutagenesis site" description="Defects in hydrotropic response." evidence="18">
    <original>G</original>
    <variation>E</variation>
    <location>
        <position position="951"/>
    </location>
</feature>
<feature type="sequence conflict" description="In Ref. 2; AAA91150." evidence="21" ref="2">
    <original>T</original>
    <variation>I</variation>
    <location>
        <position position="111"/>
    </location>
</feature>
<feature type="sequence conflict" description="In Ref. 2; AAA91150." evidence="21" ref="2">
    <original>A</original>
    <variation>G</variation>
    <location>
        <position position="867"/>
    </location>
</feature>
<evidence type="ECO:0000255" key="1"/>
<evidence type="ECO:0000255" key="2">
    <source>
        <dbReference type="PROSITE-ProRule" id="PRU00189"/>
    </source>
</evidence>
<evidence type="ECO:0000256" key="3">
    <source>
        <dbReference type="SAM" id="MobiDB-lite"/>
    </source>
</evidence>
<evidence type="ECO:0000269" key="4">
    <source>
    </source>
</evidence>
<evidence type="ECO:0000269" key="5">
    <source>
    </source>
</evidence>
<evidence type="ECO:0000269" key="6">
    <source>
    </source>
</evidence>
<evidence type="ECO:0000269" key="7">
    <source>
    </source>
</evidence>
<evidence type="ECO:0000269" key="8">
    <source>
    </source>
</evidence>
<evidence type="ECO:0000269" key="9">
    <source>
    </source>
</evidence>
<evidence type="ECO:0000269" key="10">
    <source>
    </source>
</evidence>
<evidence type="ECO:0000269" key="11">
    <source>
    </source>
</evidence>
<evidence type="ECO:0000269" key="12">
    <source>
    </source>
</evidence>
<evidence type="ECO:0000269" key="13">
    <source>
    </source>
</evidence>
<evidence type="ECO:0000269" key="14">
    <source>
    </source>
</evidence>
<evidence type="ECO:0000269" key="15">
    <source>
    </source>
</evidence>
<evidence type="ECO:0000269" key="16">
    <source>
    </source>
</evidence>
<evidence type="ECO:0000269" key="17">
    <source>
    </source>
</evidence>
<evidence type="ECO:0000269" key="18">
    <source ref="18"/>
</evidence>
<evidence type="ECO:0000269" key="19">
    <source ref="19"/>
</evidence>
<evidence type="ECO:0000269" key="20">
    <source ref="6"/>
</evidence>
<evidence type="ECO:0000305" key="21"/>
<name>GNOM_ARATH</name>
<sequence>MGRLKLHSGIKAIEEEPEDFECTDSSNTTTLACMIDTEIAAVLAVMRRNVRWGGRYMSGDDQLEHSLIQSLKALRKQVFSWNQPWHTISPMLYLQPFLDVIRSDETGAPITSIALSSVYKILNLNVIDQNTANIEDAMHLVVDSVTSCRFEVTDPASEEVVLMKILQVLLACMKNKASVMLSNQHVCTVVNTCFRVVHQAGMKGELLQRVARHTMHELVRCIFSHLPDVERTETTLVNRAGSIKQEKAGVDSDYAIVSKPVEDGNANSEYDVENSMATFATGAQSLMDDGPVGPGSRKPASPYDLHIMTEPYGVPSMVEIFHFLCSLLNVVEHVGMGSRSNTIAFDEDVPLFALNLINSAIELGGSSIRHHPRLLSLIQDELFRNLMQFGLSMSPLILSMVCSIVLNLYQHLRTELKLQLEAFFSCVILRLAQGKYGPSYQQQEVAMEALVNFCRQKSFMVEMYANLDCDITCSNVFEELSNLLSKSTFPVNCPLSAMHILALDGLIAVIQGMAERISNGLTGLDLGPVHLDEYTPFWMVKCDNYSDPNHWVSFVRRRKYIKRRLMIGADHFNRDPKKGLEFLQGTHLLPDKLDPQSVACFFRYTAGLDKNLVGDFLGNHDEFCVQVLNEFAGTFDFQYMNLDTALRLFLETFRLPGESQKIQRVLEAFSERYYMQSPEILANKDAALVLSYSIIMLNTDQHNVQVKKKMTEEDFIRNNRHINGGNDLPREFLSELFHSICNNEIRTTPEQGAGFPEMTPSRWIDLMHKSKKTAPYILADSRAYLDHDMFAIMSGPTIAAISVVFDHAEHEDVYQTCIDGFLAIAKISACHHLEDVLDDLVVSLCKFTTLLNPSSVDEPVLAFGDDAKARMATITIFTIANKYGDYIRTGWRNILDCILRLHKLGLLPARVASDAADESEHSSEQGQGKPLANSLSSAHLQSMGTPRRSSGLMGRFSQLLSLDTEEPRSQPTEQQLAAHQRTLQTIQKCHIDSIFTESKFLQAESLLQLARALIWAAGRPQKGTSSPEDEDTAVFCLELLIAITLNNRDRIVLLWQGVYEHIATIAQSTVMPCNLVDKAIFGLLRICQRLLPYKESLADELLRSLQLVLKLDARVADAYCEQIAIEVSRLVKANANHIRSQAGWRTITSLLSITARHPEASESGFDAVSFVMSEGTHLYPANYVLCVDAARQFAESRVGQSERSIRALDLMGDSLEFLAKWALSAKENMGEEDFGKMSQDIGEMWLRLVQGLRKVCLDQREDVRNHALQSLQKCLGGVDGINLAHSMWSQCFDKVIFTVLDDLLEIAAGSQKDYRNMEGTLLLAIKLLSKVFLQQLQELSQLSTFCKLWLGVLTRMEKYMKVKVRGKKSDKLQESVPELLKNILLVMKTKGVLLQRSALGGDSLWELTWLHVNNIAPSMRLELFPDQESSQLGDDETVSNGLSSPENTTGS</sequence>
<protein>
    <recommendedName>
        <fullName>ARF guanine-nucleotide exchange factor GNOM</fullName>
    </recommendedName>
    <alternativeName>
        <fullName>Pattern formation protein EMB30</fullName>
    </alternativeName>
    <alternativeName>
        <fullName>Protein EMBRYO DEFECTIVE 30</fullName>
    </alternativeName>
    <alternativeName>
        <fullName>Protein MIZU-KUSSEI2</fullName>
    </alternativeName>
    <alternativeName>
        <fullName>Protein VASCULAR NETWORK 7</fullName>
    </alternativeName>
</protein>
<proteinExistence type="evidence at protein level"/>
<keyword id="KW-0130">Cell adhesion</keyword>
<keyword id="KW-1003">Cell membrane</keyword>
<keyword id="KW-0963">Cytoplasm</keyword>
<keyword id="KW-0254">Endocytosis</keyword>
<keyword id="KW-0967">Endosome</keyword>
<keyword id="KW-0931">ER-Golgi transport</keyword>
<keyword id="KW-0344">Guanine-nucleotide releasing factor</keyword>
<keyword id="KW-0472">Membrane</keyword>
<keyword id="KW-0653">Protein transport</keyword>
<keyword id="KW-1185">Reference proteome</keyword>
<keyword id="KW-0813">Transport</keyword>